<gene>
    <name type="primary">Pgr</name>
    <name type="synonym">Nr3c3</name>
</gene>
<evidence type="ECO:0000250" key="1"/>
<evidence type="ECO:0000250" key="2">
    <source>
        <dbReference type="UniProtKB" id="P06401"/>
    </source>
</evidence>
<evidence type="ECO:0000250" key="3">
    <source>
        <dbReference type="UniProtKB" id="Q00175"/>
    </source>
</evidence>
<evidence type="ECO:0000255" key="4"/>
<evidence type="ECO:0000255" key="5">
    <source>
        <dbReference type="PROSITE-ProRule" id="PRU00407"/>
    </source>
</evidence>
<evidence type="ECO:0000255" key="6">
    <source>
        <dbReference type="PROSITE-ProRule" id="PRU01189"/>
    </source>
</evidence>
<evidence type="ECO:0000256" key="7">
    <source>
        <dbReference type="SAM" id="MobiDB-lite"/>
    </source>
</evidence>
<evidence type="ECO:0000269" key="8">
    <source>
    </source>
</evidence>
<evidence type="ECO:0000305" key="9"/>
<name>PRGR_RAT</name>
<proteinExistence type="evidence at transcript level"/>
<organism>
    <name type="scientific">Rattus norvegicus</name>
    <name type="common">Rat</name>
    <dbReference type="NCBI Taxonomy" id="10116"/>
    <lineage>
        <taxon>Eukaryota</taxon>
        <taxon>Metazoa</taxon>
        <taxon>Chordata</taxon>
        <taxon>Craniata</taxon>
        <taxon>Vertebrata</taxon>
        <taxon>Euteleostomi</taxon>
        <taxon>Mammalia</taxon>
        <taxon>Eutheria</taxon>
        <taxon>Euarchontoglires</taxon>
        <taxon>Glires</taxon>
        <taxon>Rodentia</taxon>
        <taxon>Myomorpha</taxon>
        <taxon>Muroidea</taxon>
        <taxon>Muridae</taxon>
        <taxon>Murinae</taxon>
        <taxon>Rattus</taxon>
    </lineage>
</organism>
<dbReference type="EMBL" id="L16922">
    <property type="protein sequence ID" value="AAA19916.1"/>
    <property type="molecule type" value="mRNA"/>
</dbReference>
<dbReference type="PIR" id="I53280">
    <property type="entry name" value="I53280"/>
</dbReference>
<dbReference type="RefSeq" id="NP_074038.1">
    <property type="nucleotide sequence ID" value="NM_022847.1"/>
</dbReference>
<dbReference type="SMR" id="Q63449"/>
<dbReference type="FunCoup" id="Q63449">
    <property type="interactions" value="252"/>
</dbReference>
<dbReference type="STRING" id="10116.ENSRNOP00000032053"/>
<dbReference type="BindingDB" id="Q63449"/>
<dbReference type="ChEMBL" id="CHEMBL2596"/>
<dbReference type="DrugCentral" id="Q63449"/>
<dbReference type="GlyGen" id="Q63449">
    <property type="glycosylation" value="1 site"/>
</dbReference>
<dbReference type="iPTMnet" id="Q63449"/>
<dbReference type="PhosphoSitePlus" id="Q63449"/>
<dbReference type="PaxDb" id="10116-ENSRNOP00000032053"/>
<dbReference type="GeneID" id="25154"/>
<dbReference type="KEGG" id="rno:25154"/>
<dbReference type="UCSC" id="RGD:3317">
    <molecule id="Q63449-1"/>
    <property type="organism name" value="rat"/>
</dbReference>
<dbReference type="AGR" id="RGD:3317"/>
<dbReference type="CTD" id="5241"/>
<dbReference type="RGD" id="3317">
    <property type="gene designation" value="Pgr"/>
</dbReference>
<dbReference type="eggNOG" id="KOG3575">
    <property type="taxonomic scope" value="Eukaryota"/>
</dbReference>
<dbReference type="InParanoid" id="Q63449"/>
<dbReference type="OrthoDB" id="8580220at2759"/>
<dbReference type="PhylomeDB" id="Q63449"/>
<dbReference type="Reactome" id="R-RNO-3371497">
    <property type="pathway name" value="HSP90 chaperone cycle for steroid hormone receptors (SHR) in the presence of ligand"/>
</dbReference>
<dbReference type="Reactome" id="R-RNO-383280">
    <property type="pathway name" value="Nuclear Receptor transcription pathway"/>
</dbReference>
<dbReference type="Reactome" id="R-RNO-4090294">
    <property type="pathway name" value="SUMOylation of intracellular receptors"/>
</dbReference>
<dbReference type="Reactome" id="R-RNO-9018519">
    <property type="pathway name" value="Estrogen-dependent gene expression"/>
</dbReference>
<dbReference type="PRO" id="PR:Q63449"/>
<dbReference type="Proteomes" id="UP000002494">
    <property type="component" value="Unplaced"/>
</dbReference>
<dbReference type="GO" id="GO:0030424">
    <property type="term" value="C:axon"/>
    <property type="evidence" value="ECO:0000314"/>
    <property type="project" value="RGD"/>
</dbReference>
<dbReference type="GO" id="GO:0043679">
    <property type="term" value="C:axon terminus"/>
    <property type="evidence" value="ECO:0000314"/>
    <property type="project" value="RGD"/>
</dbReference>
<dbReference type="GO" id="GO:0000785">
    <property type="term" value="C:chromatin"/>
    <property type="evidence" value="ECO:0000266"/>
    <property type="project" value="RGD"/>
</dbReference>
<dbReference type="GO" id="GO:0005737">
    <property type="term" value="C:cytoplasm"/>
    <property type="evidence" value="ECO:0007669"/>
    <property type="project" value="UniProtKB-SubCell"/>
</dbReference>
<dbReference type="GO" id="GO:0030425">
    <property type="term" value="C:dendrite"/>
    <property type="evidence" value="ECO:0000314"/>
    <property type="project" value="RGD"/>
</dbReference>
<dbReference type="GO" id="GO:0043197">
    <property type="term" value="C:dendritic spine"/>
    <property type="evidence" value="ECO:0000314"/>
    <property type="project" value="RGD"/>
</dbReference>
<dbReference type="GO" id="GO:0005634">
    <property type="term" value="C:nucleus"/>
    <property type="evidence" value="ECO:0000266"/>
    <property type="project" value="RGD"/>
</dbReference>
<dbReference type="GO" id="GO:0043204">
    <property type="term" value="C:perikaryon"/>
    <property type="evidence" value="ECO:0000314"/>
    <property type="project" value="RGD"/>
</dbReference>
<dbReference type="GO" id="GO:0005886">
    <property type="term" value="C:plasma membrane"/>
    <property type="evidence" value="ECO:0000266"/>
    <property type="project" value="RGD"/>
</dbReference>
<dbReference type="GO" id="GO:0051117">
    <property type="term" value="F:ATPase binding"/>
    <property type="evidence" value="ECO:0000266"/>
    <property type="project" value="RGD"/>
</dbReference>
<dbReference type="GO" id="GO:0001228">
    <property type="term" value="F:DNA-binding transcription activator activity, RNA polymerase II-specific"/>
    <property type="evidence" value="ECO:0000266"/>
    <property type="project" value="RGD"/>
</dbReference>
<dbReference type="GO" id="GO:0019899">
    <property type="term" value="F:enzyme binding"/>
    <property type="evidence" value="ECO:0000266"/>
    <property type="project" value="RGD"/>
</dbReference>
<dbReference type="GO" id="GO:0034056">
    <property type="term" value="F:estrogen response element binding"/>
    <property type="evidence" value="ECO:0000318"/>
    <property type="project" value="GO_Central"/>
</dbReference>
<dbReference type="GO" id="GO:0042562">
    <property type="term" value="F:hormone binding"/>
    <property type="evidence" value="ECO:0000315"/>
    <property type="project" value="RGD"/>
</dbReference>
<dbReference type="GO" id="GO:0042802">
    <property type="term" value="F:identical protein binding"/>
    <property type="evidence" value="ECO:0000266"/>
    <property type="project" value="RGD"/>
</dbReference>
<dbReference type="GO" id="GO:0004879">
    <property type="term" value="F:nuclear receptor activity"/>
    <property type="evidence" value="ECO:0000266"/>
    <property type="project" value="RGD"/>
</dbReference>
<dbReference type="GO" id="GO:0003707">
    <property type="term" value="F:nuclear steroid receptor activity"/>
    <property type="evidence" value="ECO:0000315"/>
    <property type="project" value="RGD"/>
</dbReference>
<dbReference type="GO" id="GO:0000978">
    <property type="term" value="F:RNA polymerase II cis-regulatory region sequence-specific DNA binding"/>
    <property type="evidence" value="ECO:0000266"/>
    <property type="project" value="RGD"/>
</dbReference>
<dbReference type="GO" id="GO:0043565">
    <property type="term" value="F:sequence-specific DNA binding"/>
    <property type="evidence" value="ECO:0000314"/>
    <property type="project" value="RGD"/>
</dbReference>
<dbReference type="GO" id="GO:0005496">
    <property type="term" value="F:steroid binding"/>
    <property type="evidence" value="ECO:0000315"/>
    <property type="project" value="RGD"/>
</dbReference>
<dbReference type="GO" id="GO:0001223">
    <property type="term" value="F:transcription coactivator binding"/>
    <property type="evidence" value="ECO:0000266"/>
    <property type="project" value="RGD"/>
</dbReference>
<dbReference type="GO" id="GO:0008270">
    <property type="term" value="F:zinc ion binding"/>
    <property type="evidence" value="ECO:0007669"/>
    <property type="project" value="UniProtKB-KW"/>
</dbReference>
<dbReference type="GO" id="GO:0071391">
    <property type="term" value="P:cellular response to estrogen stimulus"/>
    <property type="evidence" value="ECO:0000270"/>
    <property type="project" value="RGD"/>
</dbReference>
<dbReference type="GO" id="GO:0071372">
    <property type="term" value="P:cellular response to follicle-stimulating hormone stimulus"/>
    <property type="evidence" value="ECO:0000270"/>
    <property type="project" value="RGD"/>
</dbReference>
<dbReference type="GO" id="GO:0071371">
    <property type="term" value="P:cellular response to gonadotropin stimulus"/>
    <property type="evidence" value="ECO:0000270"/>
    <property type="project" value="RGD"/>
</dbReference>
<dbReference type="GO" id="GO:0071373">
    <property type="term" value="P:cellular response to luteinizing hormone stimulus"/>
    <property type="evidence" value="ECO:0000270"/>
    <property type="project" value="RGD"/>
</dbReference>
<dbReference type="GO" id="GO:1904568">
    <property type="term" value="P:cellular response to wortmannin"/>
    <property type="evidence" value="ECO:0000270"/>
    <property type="project" value="RGD"/>
</dbReference>
<dbReference type="GO" id="GO:0016101">
    <property type="term" value="P:diterpenoid metabolic process"/>
    <property type="evidence" value="ECO:0000270"/>
    <property type="project" value="RGD"/>
</dbReference>
<dbReference type="GO" id="GO:0002070">
    <property type="term" value="P:epithelial cell maturation"/>
    <property type="evidence" value="ECO:0000266"/>
    <property type="project" value="RGD"/>
</dbReference>
<dbReference type="GO" id="GO:0044849">
    <property type="term" value="P:estrous cycle"/>
    <property type="evidence" value="ECO:0000270"/>
    <property type="project" value="RGD"/>
</dbReference>
<dbReference type="GO" id="GO:0060180">
    <property type="term" value="P:female mating behavior"/>
    <property type="evidence" value="ECO:0000315"/>
    <property type="project" value="RGD"/>
</dbReference>
<dbReference type="GO" id="GO:0002071">
    <property type="term" value="P:glandular epithelial cell maturation"/>
    <property type="evidence" value="ECO:0000266"/>
    <property type="project" value="RGD"/>
</dbReference>
<dbReference type="GO" id="GO:0048286">
    <property type="term" value="P:lung alveolus development"/>
    <property type="evidence" value="ECO:0000266"/>
    <property type="project" value="RGD"/>
</dbReference>
<dbReference type="GO" id="GO:0001553">
    <property type="term" value="P:luteinization"/>
    <property type="evidence" value="ECO:0000270"/>
    <property type="project" value="RGD"/>
</dbReference>
<dbReference type="GO" id="GO:0051457">
    <property type="term" value="P:maintenance of protein location in nucleus"/>
    <property type="evidence" value="ECO:0000266"/>
    <property type="project" value="RGD"/>
</dbReference>
<dbReference type="GO" id="GO:0030879">
    <property type="term" value="P:mammary gland development"/>
    <property type="evidence" value="ECO:0000266"/>
    <property type="project" value="RGD"/>
</dbReference>
<dbReference type="GO" id="GO:0043066">
    <property type="term" value="P:negative regulation of apoptotic process"/>
    <property type="evidence" value="ECO:0000315"/>
    <property type="project" value="RGD"/>
</dbReference>
<dbReference type="GO" id="GO:0045892">
    <property type="term" value="P:negative regulation of DNA-templated transcription"/>
    <property type="evidence" value="ECO:0000270"/>
    <property type="project" value="RGD"/>
</dbReference>
<dbReference type="GO" id="GO:0010629">
    <property type="term" value="P:negative regulation of gene expression"/>
    <property type="evidence" value="ECO:0000266"/>
    <property type="project" value="RGD"/>
</dbReference>
<dbReference type="GO" id="GO:1904709">
    <property type="term" value="P:negative regulation of granulosa cell apoptotic process"/>
    <property type="evidence" value="ECO:0000315"/>
    <property type="project" value="RGD"/>
</dbReference>
<dbReference type="GO" id="GO:0030518">
    <property type="term" value="P:nuclear receptor-mediated steroid hormone signaling pathway"/>
    <property type="evidence" value="ECO:0000318"/>
    <property type="project" value="GO_Central"/>
</dbReference>
<dbReference type="GO" id="GO:0001542">
    <property type="term" value="P:ovulation from ovarian follicle"/>
    <property type="evidence" value="ECO:0000266"/>
    <property type="project" value="RGD"/>
</dbReference>
<dbReference type="GO" id="GO:0038001">
    <property type="term" value="P:paracrine signaling"/>
    <property type="evidence" value="ECO:0000266"/>
    <property type="project" value="RGD"/>
</dbReference>
<dbReference type="GO" id="GO:0008284">
    <property type="term" value="P:positive regulation of cell population proliferation"/>
    <property type="evidence" value="ECO:0000314"/>
    <property type="project" value="RGD"/>
</dbReference>
<dbReference type="GO" id="GO:0045893">
    <property type="term" value="P:positive regulation of DNA-templated transcription"/>
    <property type="evidence" value="ECO:0000314"/>
    <property type="project" value="RGD"/>
</dbReference>
<dbReference type="GO" id="GO:0014911">
    <property type="term" value="P:positive regulation of smooth muscle cell migration"/>
    <property type="evidence" value="ECO:0000315"/>
    <property type="project" value="RGD"/>
</dbReference>
<dbReference type="GO" id="GO:0045944">
    <property type="term" value="P:positive regulation of transcription by RNA polymerase II"/>
    <property type="evidence" value="ECO:0000266"/>
    <property type="project" value="RGD"/>
</dbReference>
<dbReference type="GO" id="GO:0050847">
    <property type="term" value="P:progesterone receptor signaling pathway"/>
    <property type="evidence" value="ECO:0000266"/>
    <property type="project" value="RGD"/>
</dbReference>
<dbReference type="GO" id="GO:0006355">
    <property type="term" value="P:regulation of DNA-templated transcription"/>
    <property type="evidence" value="ECO:0000266"/>
    <property type="project" value="RGD"/>
</dbReference>
<dbReference type="GO" id="GO:0050678">
    <property type="term" value="P:regulation of epithelial cell proliferation"/>
    <property type="evidence" value="ECO:0000266"/>
    <property type="project" value="RGD"/>
</dbReference>
<dbReference type="GO" id="GO:0006357">
    <property type="term" value="P:regulation of transcription by RNA polymerase II"/>
    <property type="evidence" value="ECO:0000318"/>
    <property type="project" value="GO_Central"/>
</dbReference>
<dbReference type="GO" id="GO:0042220">
    <property type="term" value="P:response to cocaine"/>
    <property type="evidence" value="ECO:0000314"/>
    <property type="project" value="RGD"/>
</dbReference>
<dbReference type="GO" id="GO:0043627">
    <property type="term" value="P:response to estrogen"/>
    <property type="evidence" value="ECO:0000270"/>
    <property type="project" value="RGD"/>
</dbReference>
<dbReference type="GO" id="GO:0032570">
    <property type="term" value="P:response to progesterone"/>
    <property type="evidence" value="ECO:0000270"/>
    <property type="project" value="RGD"/>
</dbReference>
<dbReference type="GO" id="GO:0060085">
    <property type="term" value="P:smooth muscle relaxation of the bladder outlet"/>
    <property type="evidence" value="ECO:0000266"/>
    <property type="project" value="RGD"/>
</dbReference>
<dbReference type="GO" id="GO:0060748">
    <property type="term" value="P:tertiary branching involved in mammary gland duct morphogenesis"/>
    <property type="evidence" value="ECO:0000266"/>
    <property type="project" value="RGD"/>
</dbReference>
<dbReference type="CDD" id="cd07172">
    <property type="entry name" value="NR_DBD_GR_PR"/>
    <property type="match status" value="1"/>
</dbReference>
<dbReference type="CDD" id="cd07074">
    <property type="entry name" value="NR_LBD_PR"/>
    <property type="match status" value="1"/>
</dbReference>
<dbReference type="FunFam" id="1.10.565.10:FF:000004">
    <property type="entry name" value="Androgen receptor variant"/>
    <property type="match status" value="1"/>
</dbReference>
<dbReference type="FunFam" id="3.30.50.10:FF:000027">
    <property type="entry name" value="Progesterone receptor"/>
    <property type="match status" value="1"/>
</dbReference>
<dbReference type="Gene3D" id="3.30.50.10">
    <property type="entry name" value="Erythroid Transcription Factor GATA-1, subunit A"/>
    <property type="match status" value="1"/>
</dbReference>
<dbReference type="Gene3D" id="1.10.565.10">
    <property type="entry name" value="Retinoid X Receptor"/>
    <property type="match status" value="1"/>
</dbReference>
<dbReference type="InterPro" id="IPR035500">
    <property type="entry name" value="NHR-like_dom_sf"/>
</dbReference>
<dbReference type="InterPro" id="IPR000536">
    <property type="entry name" value="Nucl_hrmn_rcpt_lig-bd"/>
</dbReference>
<dbReference type="InterPro" id="IPR050200">
    <property type="entry name" value="Nuclear_hormone_rcpt_NR3"/>
</dbReference>
<dbReference type="InterPro" id="IPR001723">
    <property type="entry name" value="Nuclear_hrmn_rcpt"/>
</dbReference>
<dbReference type="InterPro" id="IPR000128">
    <property type="entry name" value="Progest_rcpt"/>
</dbReference>
<dbReference type="InterPro" id="IPR001628">
    <property type="entry name" value="Znf_hrmn_rcpt"/>
</dbReference>
<dbReference type="InterPro" id="IPR013088">
    <property type="entry name" value="Znf_NHR/GATA"/>
</dbReference>
<dbReference type="PANTHER" id="PTHR48092">
    <property type="entry name" value="KNIRPS-RELATED PROTEIN-RELATED"/>
    <property type="match status" value="1"/>
</dbReference>
<dbReference type="Pfam" id="PF00104">
    <property type="entry name" value="Hormone_recep"/>
    <property type="match status" value="1"/>
</dbReference>
<dbReference type="Pfam" id="PF02161">
    <property type="entry name" value="Prog_receptor"/>
    <property type="match status" value="1"/>
</dbReference>
<dbReference type="Pfam" id="PF00105">
    <property type="entry name" value="zf-C4"/>
    <property type="match status" value="1"/>
</dbReference>
<dbReference type="PRINTS" id="PR00544">
    <property type="entry name" value="PROGESTRONER"/>
</dbReference>
<dbReference type="PRINTS" id="PR00398">
    <property type="entry name" value="STRDHORMONER"/>
</dbReference>
<dbReference type="PRINTS" id="PR00047">
    <property type="entry name" value="STROIDFINGER"/>
</dbReference>
<dbReference type="SMART" id="SM00430">
    <property type="entry name" value="HOLI"/>
    <property type="match status" value="1"/>
</dbReference>
<dbReference type="SMART" id="SM00399">
    <property type="entry name" value="ZnF_C4"/>
    <property type="match status" value="1"/>
</dbReference>
<dbReference type="SUPFAM" id="SSF57716">
    <property type="entry name" value="Glucocorticoid receptor-like (DNA-binding domain)"/>
    <property type="match status" value="1"/>
</dbReference>
<dbReference type="SUPFAM" id="SSF48508">
    <property type="entry name" value="Nuclear receptor ligand-binding domain"/>
    <property type="match status" value="1"/>
</dbReference>
<dbReference type="PROSITE" id="PS51843">
    <property type="entry name" value="NR_LBD"/>
    <property type="match status" value="1"/>
</dbReference>
<dbReference type="PROSITE" id="PS00031">
    <property type="entry name" value="NUCLEAR_REC_DBD_1"/>
    <property type="match status" value="1"/>
</dbReference>
<dbReference type="PROSITE" id="PS51030">
    <property type="entry name" value="NUCLEAR_REC_DBD_2"/>
    <property type="match status" value="1"/>
</dbReference>
<reference key="1">
    <citation type="journal article" date="1994" name="Endocrinology">
        <title>Regulation of the progesterone receptor gene by gonadotropins and cyclic adenosine 3',5'-monophosphate in rat granulosa cells.</title>
        <authorList>
            <person name="Park-Sarge O.K."/>
            <person name="Mayo K.E."/>
        </authorList>
    </citation>
    <scope>NUCLEOTIDE SEQUENCE [MRNA]</scope>
    <source>
        <strain>Sprague-Dawley</strain>
        <tissue>Placenta</tissue>
    </source>
</reference>
<reference key="2">
    <citation type="journal article" date="1991" name="Mol. Endocrinol.">
        <title>Transient expression of progesterone receptor messenger RNA in ovarian granulosa cells after the preovulatory luteinizing hormone surge.</title>
        <authorList>
            <person name="Park-Sarge O.K."/>
            <person name="Mayo K.E."/>
        </authorList>
    </citation>
    <scope>INDUCTION</scope>
</reference>
<reference key="3">
    <citation type="journal article" date="1993" name="Mol. Endocrinol.">
        <title>Cloning of the rat progesterone receptor gene 5'-region and identification of two functionally distinct promoters.</title>
        <authorList>
            <person name="Kraus W.L."/>
            <person name="Montano M.M."/>
            <person name="Katzenellenbogen B.S."/>
        </authorList>
    </citation>
    <scope>ALTERNATIVE PROMOTER USAGE</scope>
</reference>
<reference key="4">
    <citation type="journal article" date="2006" name="J. Endocrinol.">
        <title>Differential expression and regulation of progesterone receptor isoforms in rat and mouse pituitary cells and LbetaT2 gonadotropes.</title>
        <authorList>
            <person name="Turgeon J.L."/>
            <person name="Waring D.W."/>
        </authorList>
    </citation>
    <scope>TISSUE SPECIFICITY</scope>
</reference>
<sequence>MTELQAKDPRTLHTSGAAPSPTHVGSPLLARLDPDPFQGSQHSDASSVVSPIPISLDRLLFSRSCQAQELPDEKTQNQQSLSDVEGAFSGVEASRRRSRNPRAPEKDSRLLDSVLDTLLAPSGPEQSQTSPPACEAITSWCLFGPELPEDPRSVPATKGLLSPLMSRPESKAGDSSGTGAGQKVLPKAVSPPRQLLLPTSGSAHWPGAGVKPSQQPATVEVEEDGGLETEGSAGPLLKSKPRALEGMCSGGGVTANAPGAAPGGVTLVPKEDSRFSAPRVSLEQDAPVAPGRSPLATTVVDFIHVPILPLNHALLAARTRQLLEGDSYDGGAAAQVPFAPPRGSPSAPSPPVPCGDFPDCTYPPEGDPKEDGFPVYGEFQPPGLKIKEEEEGTEAASRSPRPYLLAGASAATFPDFPLPPRPPRAPPSRPGEAAVAAPSAAVSPVSSSGSALECILYKAEGAPPTQGSFAPLPCKPPAASSCLLPRDSLPAAPTSSAAPAIYPPLGLNGLPQLGYQAAVLKDSLPQVYPPYLNYLRPDSEASQSPQYGFDSLPQKICLICGDEASGCHYGVLTCGSCKVFFKRAMEGQHNYLCAGRNDCIVDKIRRKNCPACRLRKCCQAGMVLGGRKFKKFNKVRVMRALDGVALPQSVAFPNESQTLGQRITFSPNQEIQLVPPLINLLMSIEPDVVYAGHDNTKPDTSSSLLTSLNQLGERQLLSVVKWSKSLPGFRNLHIDDQITLIQYSWMSLMVFGLGWRSYKHVSGQMLYFAPDLILNEQRMKELSFYSLCLTMWQIPQEFVKLQVTHEEFLCMKVLLLLNTIPLEGLRSQSQFEEMRSSYIRELIKAIGLRQKGVVPSSQRFYQLTKLLDSLHDLVKQLHLYCLNTFIQSRALAVEFPEMMSEVIAAQLPKILAGMVKPLLFHKK</sequence>
<comment type="function">
    <text evidence="2">The steroid hormones and their receptors are involved in the regulation of eukaryotic gene expression and affect cellular proliferation and differentiation in target tissues. Depending on the isoform, progesterone receptor functions as a transcriptional activator or repressor (By similarity).</text>
</comment>
<comment type="function">
    <molecule>Isoform A</molecule>
    <text evidence="2">Ligand-dependent transdominant repressor of steroid hormone receptor transcriptional activity including repression of its isoform B, MR and ER. Transrepressional activity may involve recruitment of corepressor NCOR2.</text>
</comment>
<comment type="function">
    <molecule>Isoform B</molecule>
    <text evidence="2">Transcriptional activator of several progesteron-dependent promoters in a variety of cell types. Involved in activation of SRC-dependent MAPK signaling on hormone stimulation.</text>
</comment>
<comment type="subunit">
    <text evidence="2 3">Interacts with SMARD1 and UNC45A. Interacts with CUEDC2; the interaction promotes ubiquitination, decreases sumoylation, and represses transcriptional activity. Interacts with PIAS3; the interaction promotes sumoylation of PR in a hormone-dependent manner, inhibits DNA-binding, and alters nuclear export. Interacts with SP1; the interaction requires ligand-induced phosphorylation on Ser-344. Interacts with PRMT2 (By similarity). Isoform A interacts with NCOR2. Isoform B (but not isoform A) interacts with NCOA2 and NCOA1 (By similarity). Isoform B (but not isoform A) interacts with KLF9. Interacts with GTF2B (By similarity).</text>
</comment>
<comment type="subcellular location">
    <subcellularLocation>
        <location>Nucleus</location>
    </subcellularLocation>
    <subcellularLocation>
        <location>Cytoplasm</location>
    </subcellularLocation>
    <text evidence="1">Nucleoplasmic shuttling is both hormone- and cell cycle-dependent. On hormone stimulation, retained in the cytoplasm in the G(1) and G(2)/M phases (By similarity).</text>
</comment>
<comment type="alternative products">
    <event type="alternative promoter"/>
    <isoform>
        <id>Q63449-1</id>
        <name>B</name>
        <name>PRB</name>
        <name>PR-B</name>
        <sequence type="displayed"/>
    </isoform>
    <isoform>
        <id>Q63449-2</id>
        <name>A</name>
        <name>PRA</name>
        <name>PR-A</name>
        <sequence type="described" ref="VSP_058744"/>
    </isoform>
</comment>
<comment type="tissue specificity">
    <text evidence="8">Isoform A and isoform B are expressed in the pituitary.</text>
</comment>
<comment type="domain">
    <text>Composed of three domains: a modulating N-terminal domain, a DNA-binding domain and a C-terminal ligand-binding domain.</text>
</comment>
<comment type="PTM">
    <text evidence="1">Phosphorylated on multiple serine sites. Several of these sites are hormone-dependent. Phosphorylation on Ser-293 is highly hormone-dependent and modulates ubiquitination and sumoylation on Lys-387. Phosphorylation on Ser-344 also requires induction by hormone. Basal phosphorylation on Ser-82, Ser-190 and Ser-399 is increased in response to progesterone and can be phosphorylated in vitro by the CDK2-A1 complex. Increased levels of phosphorylation on Ser-399 also in the presence of EGF, heregulin, IGF, PMA and FBS. Phosphorylation at this site by CDK2 is ligand-independent, and increases nuclear translocation and transcriptional activity. Phosphorylation at Ser-293, but not at Ser-190, is impaired during the G(2)/M phase of the cell cycle. Phosphorylation on Ser-344 by ERK1/2 MAPK is required for interaction with SP1 (By similarity).</text>
</comment>
<comment type="PTM">
    <text evidence="1">Sumoylation is hormone-dependent and represses transcriptional activity. Sumoylation on all three sites is enhanced by PIAS3. Desumoylated by SENP1. Sumoylation on Lys-387, the main site of sumoylation, is repressed by ubiquitination on the same site, and modulated by phosphorylation at Ser-293 (By similarity).</text>
</comment>
<comment type="PTM">
    <text evidence="2">Ubiquitination is hormone-dependent and represses sumoylation on the same site (By similarity). Promoted by MAPK-mediated phosphorylation on Ser-293 (By similarity). Ubiquitinated by UBR5, leading to its degradation: UBR5 specifically recognizes and binds ligand-bound PGR when it is not associated with coactivators (NCOAs) (By similarity). In presence of NCOAs, the UBR5-degron is not accessible, preventing its ubiquitination and degradation (By similarity).</text>
</comment>
<comment type="PTM">
    <text evidence="1">Palmitoylated by ZDHHC7 and ZDHHC21. Palmitoylation is required for plasma membrane targeting and for rapid intracellular signaling via ERK and AKT kinases and cAMP generation (By similarity).</text>
</comment>
<comment type="similarity">
    <text evidence="9">Belongs to the nuclear hormone receptor family. NR3 subfamily.</text>
</comment>
<feature type="chain" id="PRO_0000053697" description="Progesterone receptor">
    <location>
        <begin position="1"/>
        <end position="923"/>
    </location>
</feature>
<feature type="domain" description="NR LBD" evidence="6">
    <location>
        <begin position="669"/>
        <end position="903"/>
    </location>
</feature>
<feature type="DNA-binding region" description="Nuclear receptor" evidence="5">
    <location>
        <begin position="557"/>
        <end position="629"/>
    </location>
</feature>
<feature type="zinc finger region" description="NR C4-type" evidence="5">
    <location>
        <begin position="557"/>
        <end position="577"/>
    </location>
</feature>
<feature type="zinc finger region" description="NR C4-type" evidence="5">
    <location>
        <begin position="593"/>
        <end position="617"/>
    </location>
</feature>
<feature type="region of interest" description="Modulating, Pro-Rich">
    <location>
        <begin position="1"/>
        <end position="556"/>
    </location>
</feature>
<feature type="region of interest" description="AF3; mediates transcriptional activation (in isoform B)" evidence="2">
    <location>
        <begin position="1"/>
        <end position="164"/>
    </location>
</feature>
<feature type="region of interest" description="Disordered" evidence="7">
    <location>
        <begin position="1"/>
        <end position="49"/>
    </location>
</feature>
<feature type="region of interest" description="Disordered" evidence="7">
    <location>
        <begin position="67"/>
        <end position="111"/>
    </location>
</feature>
<feature type="region of interest" description="Disordered" evidence="7">
    <location>
        <begin position="152"/>
        <end position="239"/>
    </location>
</feature>
<feature type="region of interest" description="Mediates transcriptional transrepression (in isoform A)" evidence="2">
    <location>
        <begin position="165"/>
        <end position="304"/>
    </location>
</feature>
<feature type="region of interest" description="Disordered" evidence="7">
    <location>
        <begin position="333"/>
        <end position="371"/>
    </location>
</feature>
<feature type="region of interest" description="Disordered" evidence="7">
    <location>
        <begin position="412"/>
        <end position="435"/>
    </location>
</feature>
<feature type="region of interest" description="AF1; mediates transcriptional activation" evidence="2">
    <location>
        <begin position="450"/>
        <end position="536"/>
    </location>
</feature>
<feature type="region of interest" description="AF2; mediates transcriptional activation" evidence="2">
    <location>
        <begin position="677"/>
        <end position="923"/>
    </location>
</feature>
<feature type="short sequence motif" description="LXXL motif 1" evidence="2">
    <location>
        <begin position="56"/>
        <end position="60"/>
    </location>
</feature>
<feature type="short sequence motif" description="LXXL motif 2" evidence="2">
    <location>
        <begin position="115"/>
        <end position="119"/>
    </location>
</feature>
<feature type="short sequence motif" description="Nuclear localization signal" evidence="4">
    <location>
        <begin position="184"/>
        <end position="188"/>
    </location>
</feature>
<feature type="compositionally biased region" description="Basic and acidic residues" evidence="7">
    <location>
        <begin position="1"/>
        <end position="11"/>
    </location>
</feature>
<feature type="compositionally biased region" description="Polar residues" evidence="7">
    <location>
        <begin position="38"/>
        <end position="49"/>
    </location>
</feature>
<feature type="compositionally biased region" description="Pro residues" evidence="7">
    <location>
        <begin position="338"/>
        <end position="353"/>
    </location>
</feature>
<feature type="compositionally biased region" description="Pro residues" evidence="7">
    <location>
        <begin position="416"/>
        <end position="429"/>
    </location>
</feature>
<feature type="binding site" evidence="2">
    <location>
        <position position="756"/>
    </location>
    <ligand>
        <name>progesterone</name>
        <dbReference type="ChEBI" id="CHEBI:17026"/>
    </ligand>
</feature>
<feature type="modified residue" description="Phosphoserine" evidence="2">
    <location>
        <position position="20"/>
    </location>
</feature>
<feature type="modified residue" description="Phosphoserine" evidence="2">
    <location>
        <position position="82"/>
    </location>
</feature>
<feature type="modified residue" description="Phosphoserine" evidence="2">
    <location>
        <position position="130"/>
    </location>
</feature>
<feature type="modified residue" description="Phosphoserine" evidence="2">
    <location>
        <position position="162"/>
    </location>
</feature>
<feature type="modified residue" description="Phosphoserine" evidence="2">
    <location>
        <position position="190"/>
    </location>
</feature>
<feature type="modified residue" description="Phosphoserine" evidence="2">
    <location>
        <position position="213"/>
    </location>
</feature>
<feature type="modified residue" description="Phosphoserine; by MAPK1" evidence="2">
    <location>
        <position position="293"/>
    </location>
</feature>
<feature type="modified residue" description="Phosphoserine; by MAPK" evidence="2">
    <location>
        <position position="344"/>
    </location>
</feature>
<feature type="modified residue" description="Phosphoserine; by CDK2" evidence="2">
    <location>
        <position position="399"/>
    </location>
</feature>
<feature type="modified residue" description="Phosphoserine" evidence="2">
    <location>
        <position position="666"/>
    </location>
</feature>
<feature type="cross-link" description="Glycyl lysine isopeptide (Lys-Gly) (interchain with G-Cter in SUMO)" evidence="1">
    <location>
        <position position="7"/>
    </location>
</feature>
<feature type="cross-link" description="Glycyl lysine isopeptide (Lys-Gly) (interchain with G-Cter in SUMO); alternate" evidence="1">
    <location>
        <position position="387"/>
    </location>
</feature>
<feature type="cross-link" description="Glycyl lysine isopeptide (Lys-Gly) (interchain with G-Cter in ubiquitin); alternate" evidence="2">
    <location>
        <position position="387"/>
    </location>
</feature>
<feature type="cross-link" description="Glycyl lysine isopeptide (Lys-Gly) (interchain with G-Cter in SUMO)" evidence="1">
    <location>
        <position position="521"/>
    </location>
</feature>
<feature type="splice variant" id="VSP_058744" description="In isoform A." evidence="9">
    <location>
        <begin position="1"/>
        <end position="164"/>
    </location>
</feature>
<protein>
    <recommendedName>
        <fullName>Progesterone receptor</fullName>
        <shortName>PR</shortName>
    </recommendedName>
    <alternativeName>
        <fullName>Nuclear receptor subfamily 3 group C member 3</fullName>
    </alternativeName>
</protein>
<accession>Q63449</accession>
<keyword id="KW-0877">Alternative promoter usage</keyword>
<keyword id="KW-0963">Cytoplasm</keyword>
<keyword id="KW-0238">DNA-binding</keyword>
<keyword id="KW-1017">Isopeptide bond</keyword>
<keyword id="KW-0446">Lipid-binding</keyword>
<keyword id="KW-0449">Lipoprotein</keyword>
<keyword id="KW-0479">Metal-binding</keyword>
<keyword id="KW-0539">Nucleus</keyword>
<keyword id="KW-0564">Palmitate</keyword>
<keyword id="KW-0597">Phosphoprotein</keyword>
<keyword id="KW-0675">Receptor</keyword>
<keyword id="KW-1185">Reference proteome</keyword>
<keyword id="KW-0754">Steroid-binding</keyword>
<keyword id="KW-0804">Transcription</keyword>
<keyword id="KW-0805">Transcription regulation</keyword>
<keyword id="KW-0832">Ubl conjugation</keyword>
<keyword id="KW-0862">Zinc</keyword>
<keyword id="KW-0863">Zinc-finger</keyword>